<keyword id="KW-0067">ATP-binding</keyword>
<keyword id="KW-0235">DNA replication</keyword>
<keyword id="KW-0238">DNA-binding</keyword>
<keyword id="KW-1048">Host nucleus</keyword>
<keyword id="KW-0547">Nucleotide-binding</keyword>
<keyword id="KW-1185">Reference proteome</keyword>
<protein>
    <recommendedName>
        <fullName>Replication origin-binding protein</fullName>
        <shortName>OBP</shortName>
    </recommendedName>
    <alternativeName>
        <fullName>OriBP</fullName>
    </alternativeName>
</protein>
<comment type="function">
    <text evidence="1">Functions as a docking protein to recruit essential components of the viral replication machinery to viral DNA origins. In the presence of the major DNA-binding protein, opens dsDNA leading to a conformational change in the origin that facilitates DNA unwinding and subsequent replication (By similarity).</text>
</comment>
<comment type="subunit">
    <text evidence="1">Homodimer. Interacts with the major DNA-binding protein. Interacts with the DNA helicase/primase complex-associated protein and the polymerase accessory protein (By similarity).</text>
</comment>
<comment type="subcellular location">
    <subcellularLocation>
        <location evidence="3">Host nucleus</location>
    </subcellularLocation>
</comment>
<comment type="similarity">
    <text evidence="3">Belongs to the herpesviridae OriBP family.</text>
</comment>
<gene>
    <name type="primary">MDV021</name>
</gene>
<name>OBP_GAHVM</name>
<organism>
    <name type="scientific">Gallid herpesvirus 2 (strain Chicken/Md5/ATCC VR-987)</name>
    <name type="common">GaHV-2</name>
    <name type="synonym">Marek's disease herpesvirus type 1</name>
    <dbReference type="NCBI Taxonomy" id="10389"/>
    <lineage>
        <taxon>Viruses</taxon>
        <taxon>Duplodnaviria</taxon>
        <taxon>Heunggongvirae</taxon>
        <taxon>Peploviricota</taxon>
        <taxon>Herviviricetes</taxon>
        <taxon>Herpesvirales</taxon>
        <taxon>Orthoherpesviridae</taxon>
        <taxon>Alphaherpesvirinae</taxon>
        <taxon>Mardivirus</taxon>
        <taxon>Mardivirus gallidalpha2</taxon>
        <taxon>Gallid alphaherpesvirus 2</taxon>
    </lineage>
</organism>
<proteinExistence type="inferred from homology"/>
<sequence>MIDYASSASLSRMLYGEDLIDWIIKNRPGITTERQSDGPVTFPSPLYPRTRNVLIVRAPMGSGKTTALMNWLQCILCNSNMSVLIVSCRRSFTNTLSEKINRAGMSGFCTYLSSSDYIMRGREFSRLLVQIESLHRVDSKLLDNYDIVILDEIMSTIGQLFSPTMKHLCQVDNILTSLLRYRPKIVAMDATINTQLIDMLAIMRGEENIHVIVGEYAASGFSRRSCTILRSLGTNILLSVMNEFKQLPSHTQPIFKQSTGVNGSLDISLHDRTFFSELTRRLEGGLNICLFSSTISFSEIVARFCLAYTDSVLVLNSTRNTPIDINSWSNYRVVIYTTVVTVGLSFNDSHFHSMFAYIKPTINGPEMVSVYQSLGRIRSLRLNEVLIYIDASGAGSEPVFTPMLLNHVIANGGGWPTRFSQVTNMLCHNFRRDCIPTFRAADALYIFPRFKYKHLFERCTLNNVSDSINILHALLESNLIHVRFDGCDLQLNAEAFCDFLVILRADSITAQRDMKTLRKNATCPLPVEVDVIDSDAVACFVQKYLRPTVLANDLTELLTKLAEPITREQFINITMLEACRATPAALYSEAVFCRIYDYYASGNIPIIGPSGTLDTTILTCDFNTSGRWDLYRVCCKWAELLGINPLEGPNADIDPTKLLHVMKDDYDIYARSVLEIARCYLIDAQTALKRPVRATKCALSGIQNSHHSQPSTQSHAVSLFKVTWEILFGLRLTKSTTTFPGRTKVKNLRKAEIEALLDGAGIDRTSCKTHKDLYTLLMKSKSLFRNMRYDIRRPKWYDLLRSRLDKELGIYHDLVDLESVLAEIPSALWPRVEGAVDFHRL</sequence>
<organismHost>
    <name type="scientific">Gallus gallus</name>
    <name type="common">Chicken</name>
    <dbReference type="NCBI Taxonomy" id="9031"/>
</organismHost>
<evidence type="ECO:0000250" key="1"/>
<evidence type="ECO:0000255" key="2">
    <source>
        <dbReference type="PROSITE-ProRule" id="PRU00541"/>
    </source>
</evidence>
<evidence type="ECO:0000305" key="3"/>
<reference key="1">
    <citation type="journal article" date="2000" name="J. Virol.">
        <title>The genome of a very virulent Marek's disease virus.</title>
        <authorList>
            <person name="Tulman E.R."/>
            <person name="Afonso C.L."/>
            <person name="Lu Z."/>
            <person name="Zsak L."/>
            <person name="Rock D.L."/>
            <person name="Kutish G.F."/>
        </authorList>
    </citation>
    <scope>NUCLEOTIDE SEQUENCE [LARGE SCALE GENOMIC DNA]</scope>
</reference>
<accession>Q9E6Q7</accession>
<feature type="chain" id="PRO_0000406507" description="Replication origin-binding protein">
    <location>
        <begin position="1"/>
        <end position="841"/>
    </location>
</feature>
<feature type="domain" description="Helicase ATP-binding" evidence="2">
    <location>
        <begin position="45"/>
        <end position="210"/>
    </location>
</feature>
<feature type="binding site" evidence="2">
    <location>
        <begin position="58"/>
        <end position="65"/>
    </location>
    <ligand>
        <name>ATP</name>
        <dbReference type="ChEBI" id="CHEBI:30616"/>
    </ligand>
</feature>
<dbReference type="EMBL" id="AF243438">
    <property type="protein sequence ID" value="AAG14201.1"/>
    <property type="molecule type" value="Genomic_DNA"/>
</dbReference>
<dbReference type="RefSeq" id="YP_001033937.1">
    <property type="nucleotide sequence ID" value="NC_002229.3"/>
</dbReference>
<dbReference type="GeneID" id="4811482"/>
<dbReference type="KEGG" id="vg:4811482"/>
<dbReference type="Proteomes" id="UP000008072">
    <property type="component" value="Segment"/>
</dbReference>
<dbReference type="GO" id="GO:0042025">
    <property type="term" value="C:host cell nucleus"/>
    <property type="evidence" value="ECO:0007669"/>
    <property type="project" value="UniProtKB-SubCell"/>
</dbReference>
<dbReference type="GO" id="GO:0005524">
    <property type="term" value="F:ATP binding"/>
    <property type="evidence" value="ECO:0007669"/>
    <property type="project" value="UniProtKB-KW"/>
</dbReference>
<dbReference type="GO" id="GO:0016887">
    <property type="term" value="F:ATP hydrolysis activity"/>
    <property type="evidence" value="ECO:0007669"/>
    <property type="project" value="InterPro"/>
</dbReference>
<dbReference type="GO" id="GO:0003688">
    <property type="term" value="F:DNA replication origin binding"/>
    <property type="evidence" value="ECO:0007669"/>
    <property type="project" value="InterPro"/>
</dbReference>
<dbReference type="GO" id="GO:0006260">
    <property type="term" value="P:DNA replication"/>
    <property type="evidence" value="ECO:0007669"/>
    <property type="project" value="UniProtKB-KW"/>
</dbReference>
<dbReference type="Gene3D" id="3.40.50.300">
    <property type="entry name" value="P-loop containing nucleotide triphosphate hydrolases"/>
    <property type="match status" value="1"/>
</dbReference>
<dbReference type="InterPro" id="IPR003593">
    <property type="entry name" value="AAA+_ATPase"/>
</dbReference>
<dbReference type="InterPro" id="IPR014001">
    <property type="entry name" value="Helicase_ATP-bd"/>
</dbReference>
<dbReference type="InterPro" id="IPR027417">
    <property type="entry name" value="P-loop_NTPase"/>
</dbReference>
<dbReference type="InterPro" id="IPR003450">
    <property type="entry name" value="Replication_origin-bd"/>
</dbReference>
<dbReference type="Pfam" id="PF02399">
    <property type="entry name" value="Herpes_ori_bp"/>
    <property type="match status" value="1"/>
</dbReference>
<dbReference type="SMART" id="SM00382">
    <property type="entry name" value="AAA"/>
    <property type="match status" value="1"/>
</dbReference>
<dbReference type="SMART" id="SM00487">
    <property type="entry name" value="DEXDc"/>
    <property type="match status" value="1"/>
</dbReference>
<dbReference type="SUPFAM" id="SSF52540">
    <property type="entry name" value="P-loop containing nucleoside triphosphate hydrolases"/>
    <property type="match status" value="1"/>
</dbReference>
<dbReference type="PROSITE" id="PS51192">
    <property type="entry name" value="HELICASE_ATP_BIND_1"/>
    <property type="match status" value="1"/>
</dbReference>